<reference key="1">
    <citation type="journal article" date="2009" name="Nat. Genet.">
        <title>Comparative genomic and phylogeographic analysis of Mycobacterium leprae.</title>
        <authorList>
            <person name="Monot M."/>
            <person name="Honore N."/>
            <person name="Garnier T."/>
            <person name="Zidane N."/>
            <person name="Sherafi D."/>
            <person name="Paniz-Mondolfi A."/>
            <person name="Matsuoka M."/>
            <person name="Taylor G.M."/>
            <person name="Donoghue H.D."/>
            <person name="Bouwman A."/>
            <person name="Mays S."/>
            <person name="Watson C."/>
            <person name="Lockwood D."/>
            <person name="Khamispour A."/>
            <person name="Dowlati Y."/>
            <person name="Jianping S."/>
            <person name="Rea T.H."/>
            <person name="Vera-Cabrera L."/>
            <person name="Stefani M.M."/>
            <person name="Banu S."/>
            <person name="Macdonald M."/>
            <person name="Sapkota B.R."/>
            <person name="Spencer J.S."/>
            <person name="Thomas J."/>
            <person name="Harshman K."/>
            <person name="Singh P."/>
            <person name="Busso P."/>
            <person name="Gattiker A."/>
            <person name="Rougemont J."/>
            <person name="Brennan P.J."/>
            <person name="Cole S.T."/>
        </authorList>
    </citation>
    <scope>NUCLEOTIDE SEQUENCE [LARGE SCALE GENOMIC DNA]</scope>
    <source>
        <strain>Br4923</strain>
    </source>
</reference>
<sequence>MATYAIVKTGGKQYKVAVGDVVKIEKLDFEPGAKVSLPVTLVVDGATVTTNAKALAKVAVTGKVLEHTKGPKIRIHKFKNKTGYHKRQGHRQQLTVLKVTGIK</sequence>
<organism>
    <name type="scientific">Mycobacterium leprae (strain Br4923)</name>
    <dbReference type="NCBI Taxonomy" id="561304"/>
    <lineage>
        <taxon>Bacteria</taxon>
        <taxon>Bacillati</taxon>
        <taxon>Actinomycetota</taxon>
        <taxon>Actinomycetes</taxon>
        <taxon>Mycobacteriales</taxon>
        <taxon>Mycobacteriaceae</taxon>
        <taxon>Mycobacterium</taxon>
    </lineage>
</organism>
<gene>
    <name evidence="1" type="primary">rplU</name>
    <name type="ordered locus">MLBr01467</name>
</gene>
<protein>
    <recommendedName>
        <fullName evidence="1">Large ribosomal subunit protein bL21</fullName>
    </recommendedName>
    <alternativeName>
        <fullName evidence="2">50S ribosomal protein L21</fullName>
    </alternativeName>
</protein>
<accession>B8ZRN5</accession>
<evidence type="ECO:0000255" key="1">
    <source>
        <dbReference type="HAMAP-Rule" id="MF_01363"/>
    </source>
</evidence>
<evidence type="ECO:0000305" key="2"/>
<comment type="function">
    <text evidence="1">This protein binds to 23S rRNA in the presence of protein L20.</text>
</comment>
<comment type="subunit">
    <text evidence="1">Part of the 50S ribosomal subunit. Contacts protein L20.</text>
</comment>
<comment type="similarity">
    <text evidence="1">Belongs to the bacterial ribosomal protein bL21 family.</text>
</comment>
<proteinExistence type="inferred from homology"/>
<name>RL21_MYCLB</name>
<dbReference type="EMBL" id="FM211192">
    <property type="protein sequence ID" value="CAR71561.1"/>
    <property type="molecule type" value="Genomic_DNA"/>
</dbReference>
<dbReference type="SMR" id="B8ZRN5"/>
<dbReference type="KEGG" id="mlb:MLBr01467"/>
<dbReference type="HOGENOM" id="CLU_061463_3_0_11"/>
<dbReference type="Proteomes" id="UP000006900">
    <property type="component" value="Chromosome"/>
</dbReference>
<dbReference type="GO" id="GO:0005737">
    <property type="term" value="C:cytoplasm"/>
    <property type="evidence" value="ECO:0007669"/>
    <property type="project" value="UniProtKB-ARBA"/>
</dbReference>
<dbReference type="GO" id="GO:1990904">
    <property type="term" value="C:ribonucleoprotein complex"/>
    <property type="evidence" value="ECO:0007669"/>
    <property type="project" value="UniProtKB-KW"/>
</dbReference>
<dbReference type="GO" id="GO:0005840">
    <property type="term" value="C:ribosome"/>
    <property type="evidence" value="ECO:0007669"/>
    <property type="project" value="UniProtKB-KW"/>
</dbReference>
<dbReference type="GO" id="GO:0019843">
    <property type="term" value="F:rRNA binding"/>
    <property type="evidence" value="ECO:0007669"/>
    <property type="project" value="UniProtKB-UniRule"/>
</dbReference>
<dbReference type="GO" id="GO:0003735">
    <property type="term" value="F:structural constituent of ribosome"/>
    <property type="evidence" value="ECO:0007669"/>
    <property type="project" value="InterPro"/>
</dbReference>
<dbReference type="GO" id="GO:0006412">
    <property type="term" value="P:translation"/>
    <property type="evidence" value="ECO:0007669"/>
    <property type="project" value="UniProtKB-UniRule"/>
</dbReference>
<dbReference type="HAMAP" id="MF_01363">
    <property type="entry name" value="Ribosomal_bL21"/>
    <property type="match status" value="1"/>
</dbReference>
<dbReference type="InterPro" id="IPR028909">
    <property type="entry name" value="bL21-like"/>
</dbReference>
<dbReference type="InterPro" id="IPR036164">
    <property type="entry name" value="bL21-like_sf"/>
</dbReference>
<dbReference type="InterPro" id="IPR001787">
    <property type="entry name" value="Ribosomal_bL21"/>
</dbReference>
<dbReference type="InterPro" id="IPR018258">
    <property type="entry name" value="Ribosomal_bL21_CS"/>
</dbReference>
<dbReference type="NCBIfam" id="TIGR00061">
    <property type="entry name" value="L21"/>
    <property type="match status" value="1"/>
</dbReference>
<dbReference type="PANTHER" id="PTHR21349">
    <property type="entry name" value="50S RIBOSOMAL PROTEIN L21"/>
    <property type="match status" value="1"/>
</dbReference>
<dbReference type="PANTHER" id="PTHR21349:SF0">
    <property type="entry name" value="LARGE RIBOSOMAL SUBUNIT PROTEIN BL21M"/>
    <property type="match status" value="1"/>
</dbReference>
<dbReference type="Pfam" id="PF00829">
    <property type="entry name" value="Ribosomal_L21p"/>
    <property type="match status" value="1"/>
</dbReference>
<dbReference type="SUPFAM" id="SSF141091">
    <property type="entry name" value="L21p-like"/>
    <property type="match status" value="1"/>
</dbReference>
<dbReference type="PROSITE" id="PS01169">
    <property type="entry name" value="RIBOSOMAL_L21"/>
    <property type="match status" value="1"/>
</dbReference>
<feature type="chain" id="PRO_1000166732" description="Large ribosomal subunit protein bL21">
    <location>
        <begin position="1"/>
        <end position="103"/>
    </location>
</feature>
<keyword id="KW-0687">Ribonucleoprotein</keyword>
<keyword id="KW-0689">Ribosomal protein</keyword>
<keyword id="KW-0694">RNA-binding</keyword>
<keyword id="KW-0699">rRNA-binding</keyword>